<name>FUCT1_BOVIN</name>
<comment type="function">
    <text evidence="1">Antiporter specific for GDP-l-fucose and depending on the concomitant reverse transport of GMP. Involved in GDP-fucose import from the cytoplasm into the Golgi lumen.</text>
</comment>
<comment type="catalytic activity">
    <reaction evidence="1">
        <text>GMP(out) + GDP-beta-L-fucose(in) = GMP(in) + GDP-beta-L-fucose(out)</text>
        <dbReference type="Rhea" id="RHEA:72707"/>
        <dbReference type="ChEBI" id="CHEBI:57273"/>
        <dbReference type="ChEBI" id="CHEBI:58115"/>
    </reaction>
</comment>
<comment type="subcellular location">
    <subcellularLocation>
        <location evidence="1">Golgi apparatus membrane</location>
        <topology evidence="2">Multi-pass membrane protein</topology>
    </subcellularLocation>
</comment>
<comment type="similarity">
    <text evidence="4">Belongs to the TPT transporter family. SLC35C subfamily.</text>
</comment>
<reference key="1">
    <citation type="submission" date="2007-06" db="EMBL/GenBank/DDBJ databases">
        <authorList>
            <consortium name="NIH - Mammalian Gene Collection (MGC) project"/>
        </authorList>
    </citation>
    <scope>NUCLEOTIDE SEQUENCE [LARGE SCALE MRNA]</scope>
    <source>
        <strain>Hereford</strain>
        <tissue>Thymus</tissue>
    </source>
</reference>
<feature type="chain" id="PRO_0000343222" description="GDP-fucose transporter 1">
    <location>
        <begin position="1"/>
        <end position="364"/>
    </location>
</feature>
<feature type="transmembrane region" description="Helical" evidence="2">
    <location>
        <begin position="34"/>
        <end position="56"/>
    </location>
</feature>
<feature type="transmembrane region" description="Helical" evidence="2">
    <location>
        <begin position="76"/>
        <end position="98"/>
    </location>
</feature>
<feature type="transmembrane region" description="Helical" evidence="2">
    <location>
        <begin position="111"/>
        <end position="130"/>
    </location>
</feature>
<feature type="transmembrane region" description="Helical" evidence="2">
    <location>
        <begin position="140"/>
        <end position="162"/>
    </location>
</feature>
<feature type="transmembrane region" description="Helical" evidence="2">
    <location>
        <begin position="167"/>
        <end position="185"/>
    </location>
</feature>
<feature type="transmembrane region" description="Helical" evidence="2">
    <location>
        <begin position="195"/>
        <end position="214"/>
    </location>
</feature>
<feature type="transmembrane region" description="Helical" evidence="2">
    <location>
        <begin position="227"/>
        <end position="249"/>
    </location>
</feature>
<feature type="transmembrane region" description="Helical" evidence="2">
    <location>
        <begin position="264"/>
        <end position="286"/>
    </location>
</feature>
<feature type="region of interest" description="Disordered" evidence="3">
    <location>
        <begin position="345"/>
        <end position="364"/>
    </location>
</feature>
<sequence length="364" mass="40005">MNRASLKRSKILHMALMGTSDPSGEAEASQEKPFVLRALQIALVVSLYWVTSISMVFLNKYLLDSPSLRLDTPIFVTFYQCLVTVLLCKGLSSLATCCPGTVDFPALHLDLKVARSVLPLSVVFIGMITFNNLCLKYVGVAFYNVGRSLTTVFNVLLSYLLLKQTTSFYALLTCSVIIGGFWLGVDQEGAEGTLSWTGTLFGVLASLCVSLNAIYTKKVLPAVDGSIWRLTFYNNANACVLFLPLLLALGELRALLAFPQLGSAHFWAMMTLGGLFGFAIGYVTGLQIKFTSPLTHNVSGTAKACAQTVLAVLYYEEAKSFLWWTSNMMVLGGSSAYTWVRGREMKKTQEEPHPRENEKSNMEV</sequence>
<dbReference type="EMBL" id="BC148149">
    <property type="protein sequence ID" value="AAI48150.1"/>
    <property type="molecule type" value="mRNA"/>
</dbReference>
<dbReference type="RefSeq" id="NP_001094680.1">
    <property type="nucleotide sequence ID" value="NM_001101210.2"/>
</dbReference>
<dbReference type="SMR" id="A6QM03"/>
<dbReference type="FunCoup" id="A6QM03">
    <property type="interactions" value="595"/>
</dbReference>
<dbReference type="STRING" id="9913.ENSBTAP00000070442"/>
<dbReference type="PaxDb" id="9913-ENSBTAP00000041834"/>
<dbReference type="Ensembl" id="ENSBTAT00000085203.1">
    <property type="protein sequence ID" value="ENSBTAP00000070442.1"/>
    <property type="gene ID" value="ENSBTAG00000003199.6"/>
</dbReference>
<dbReference type="GeneID" id="540413"/>
<dbReference type="KEGG" id="bta:540413"/>
<dbReference type="CTD" id="55343"/>
<dbReference type="VEuPathDB" id="HostDB:ENSBTAG00000003199"/>
<dbReference type="VGNC" id="VGNC:34827">
    <property type="gene designation" value="SLC35C1"/>
</dbReference>
<dbReference type="eggNOG" id="KOG1442">
    <property type="taxonomic scope" value="Eukaryota"/>
</dbReference>
<dbReference type="GeneTree" id="ENSGT00390000013315"/>
<dbReference type="HOGENOM" id="CLU_044894_1_0_1"/>
<dbReference type="InParanoid" id="A6QM03"/>
<dbReference type="OMA" id="WWTSNIV"/>
<dbReference type="OrthoDB" id="5547497at2759"/>
<dbReference type="TreeFam" id="TF354269"/>
<dbReference type="Reactome" id="R-BTA-6787639">
    <property type="pathway name" value="GDP-fucose biosynthesis"/>
</dbReference>
<dbReference type="Reactome" id="R-BTA-727802">
    <property type="pathway name" value="Transport of nucleotide sugars"/>
</dbReference>
<dbReference type="Proteomes" id="UP000009136">
    <property type="component" value="Chromosome 15"/>
</dbReference>
<dbReference type="Bgee" id="ENSBTAG00000003199">
    <property type="expression patterns" value="Expressed in abomasum and 103 other cell types or tissues"/>
</dbReference>
<dbReference type="GO" id="GO:0005794">
    <property type="term" value="C:Golgi apparatus"/>
    <property type="evidence" value="ECO:0000318"/>
    <property type="project" value="GO_Central"/>
</dbReference>
<dbReference type="GO" id="GO:0000139">
    <property type="term" value="C:Golgi membrane"/>
    <property type="evidence" value="ECO:0000250"/>
    <property type="project" value="UniProtKB"/>
</dbReference>
<dbReference type="GO" id="GO:0015297">
    <property type="term" value="F:antiporter activity"/>
    <property type="evidence" value="ECO:0000318"/>
    <property type="project" value="GO_Central"/>
</dbReference>
<dbReference type="GO" id="GO:0005457">
    <property type="term" value="F:GDP-fucose transmembrane transporter activity"/>
    <property type="evidence" value="ECO:0000250"/>
    <property type="project" value="UniProtKB"/>
</dbReference>
<dbReference type="GO" id="GO:0036085">
    <property type="term" value="P:GDP-fucose import into Golgi lumen"/>
    <property type="evidence" value="ECO:0000250"/>
    <property type="project" value="UniProtKB"/>
</dbReference>
<dbReference type="InterPro" id="IPR004853">
    <property type="entry name" value="Sugar_P_trans_dom"/>
</dbReference>
<dbReference type="InterPro" id="IPR050186">
    <property type="entry name" value="TPT_transporter"/>
</dbReference>
<dbReference type="PANTHER" id="PTHR11132">
    <property type="entry name" value="SOLUTE CARRIER FAMILY 35"/>
    <property type="match status" value="1"/>
</dbReference>
<dbReference type="Pfam" id="PF03151">
    <property type="entry name" value="TPT"/>
    <property type="match status" value="1"/>
</dbReference>
<keyword id="KW-0333">Golgi apparatus</keyword>
<keyword id="KW-0472">Membrane</keyword>
<keyword id="KW-1185">Reference proteome</keyword>
<keyword id="KW-0762">Sugar transport</keyword>
<keyword id="KW-0812">Transmembrane</keyword>
<keyword id="KW-1133">Transmembrane helix</keyword>
<keyword id="KW-0813">Transport</keyword>
<proteinExistence type="evidence at transcript level"/>
<protein>
    <recommendedName>
        <fullName>GDP-fucose transporter 1</fullName>
    </recommendedName>
    <alternativeName>
        <fullName>Solute carrier family 35 member C1</fullName>
    </alternativeName>
</protein>
<organism>
    <name type="scientific">Bos taurus</name>
    <name type="common">Bovine</name>
    <dbReference type="NCBI Taxonomy" id="9913"/>
    <lineage>
        <taxon>Eukaryota</taxon>
        <taxon>Metazoa</taxon>
        <taxon>Chordata</taxon>
        <taxon>Craniata</taxon>
        <taxon>Vertebrata</taxon>
        <taxon>Euteleostomi</taxon>
        <taxon>Mammalia</taxon>
        <taxon>Eutheria</taxon>
        <taxon>Laurasiatheria</taxon>
        <taxon>Artiodactyla</taxon>
        <taxon>Ruminantia</taxon>
        <taxon>Pecora</taxon>
        <taxon>Bovidae</taxon>
        <taxon>Bovinae</taxon>
        <taxon>Bos</taxon>
    </lineage>
</organism>
<gene>
    <name type="primary">SLC35C1</name>
    <name type="synonym">FUCT1</name>
</gene>
<evidence type="ECO:0000250" key="1">
    <source>
        <dbReference type="UniProtKB" id="Q96A29"/>
    </source>
</evidence>
<evidence type="ECO:0000255" key="2"/>
<evidence type="ECO:0000256" key="3">
    <source>
        <dbReference type="SAM" id="MobiDB-lite"/>
    </source>
</evidence>
<evidence type="ECO:0000305" key="4"/>
<accession>A6QM03</accession>